<accession>P0CX14</accession>
<accession>D6VV70</accession>
<accession>P53345</accession>
<accession>Q9UQW1</accession>
<organism>
    <name type="scientific">Saccharomyces cerevisiae (strain ATCC 204508 / S288c)</name>
    <name type="common">Baker's yeast</name>
    <dbReference type="NCBI Taxonomy" id="559292"/>
    <lineage>
        <taxon>Eukaryota</taxon>
        <taxon>Fungi</taxon>
        <taxon>Dikarya</taxon>
        <taxon>Ascomycota</taxon>
        <taxon>Saccharomycotina</taxon>
        <taxon>Saccharomycetes</taxon>
        <taxon>Saccharomycetales</taxon>
        <taxon>Saccharomycetaceae</taxon>
        <taxon>Saccharomyces</taxon>
    </lineage>
</organism>
<reference key="1">
    <citation type="journal article" date="1997" name="Nature">
        <title>The nucleotide sequence of Saccharomyces cerevisiae chromosome VII.</title>
        <authorList>
            <person name="Tettelin H."/>
            <person name="Agostoni-Carbone M.L."/>
            <person name="Albermann K."/>
            <person name="Albers M."/>
            <person name="Arroyo J."/>
            <person name="Backes U."/>
            <person name="Barreiros T."/>
            <person name="Bertani I."/>
            <person name="Bjourson A.J."/>
            <person name="Brueckner M."/>
            <person name="Bruschi C.V."/>
            <person name="Carignani G."/>
            <person name="Castagnoli L."/>
            <person name="Cerdan E."/>
            <person name="Clemente M.L."/>
            <person name="Coblenz A."/>
            <person name="Coglievina M."/>
            <person name="Coissac E."/>
            <person name="Defoor E."/>
            <person name="Del Bino S."/>
            <person name="Delius H."/>
            <person name="Delneri D."/>
            <person name="de Wergifosse P."/>
            <person name="Dujon B."/>
            <person name="Durand P."/>
            <person name="Entian K.-D."/>
            <person name="Eraso P."/>
            <person name="Escribano V."/>
            <person name="Fabiani L."/>
            <person name="Fartmann B."/>
            <person name="Feroli F."/>
            <person name="Feuermann M."/>
            <person name="Frontali L."/>
            <person name="Garcia-Gonzalez M."/>
            <person name="Garcia-Saez M.I."/>
            <person name="Goffeau A."/>
            <person name="Guerreiro P."/>
            <person name="Hani J."/>
            <person name="Hansen M."/>
            <person name="Hebling U."/>
            <person name="Hernandez K."/>
            <person name="Heumann K."/>
            <person name="Hilger F."/>
            <person name="Hofmann B."/>
            <person name="Indge K.J."/>
            <person name="James C.M."/>
            <person name="Klima R."/>
            <person name="Koetter P."/>
            <person name="Kramer B."/>
            <person name="Kramer W."/>
            <person name="Lauquin G."/>
            <person name="Leuther H."/>
            <person name="Louis E.J."/>
            <person name="Maillier E."/>
            <person name="Marconi A."/>
            <person name="Martegani E."/>
            <person name="Mazon M.J."/>
            <person name="Mazzoni C."/>
            <person name="McReynolds A.D.K."/>
            <person name="Melchioretto P."/>
            <person name="Mewes H.-W."/>
            <person name="Minenkova O."/>
            <person name="Mueller-Auer S."/>
            <person name="Nawrocki A."/>
            <person name="Netter P."/>
            <person name="Neu R."/>
            <person name="Nombela C."/>
            <person name="Oliver S.G."/>
            <person name="Panzeri L."/>
            <person name="Paoluzi S."/>
            <person name="Plevani P."/>
            <person name="Portetelle D."/>
            <person name="Portillo F."/>
            <person name="Potier S."/>
            <person name="Purnelle B."/>
            <person name="Rieger M."/>
            <person name="Riles L."/>
            <person name="Rinaldi T."/>
            <person name="Robben J."/>
            <person name="Rodrigues-Pousada C."/>
            <person name="Rodriguez-Belmonte E."/>
            <person name="Rodriguez-Torres A.M."/>
            <person name="Rose M."/>
            <person name="Ruzzi M."/>
            <person name="Saliola M."/>
            <person name="Sanchez-Perez M."/>
            <person name="Schaefer B."/>
            <person name="Schaefer M."/>
            <person name="Scharfe M."/>
            <person name="Schmidheini T."/>
            <person name="Schreer A."/>
            <person name="Skala J."/>
            <person name="Souciet J.-L."/>
            <person name="Steensma H.Y."/>
            <person name="Talla E."/>
            <person name="Thierry A."/>
            <person name="Vandenbol M."/>
            <person name="van der Aart Q.J.M."/>
            <person name="Van Dyck L."/>
            <person name="Vanoni M."/>
            <person name="Verhasselt P."/>
            <person name="Voet M."/>
            <person name="Volckaert G."/>
            <person name="Wambutt R."/>
            <person name="Watson M.D."/>
            <person name="Weber N."/>
            <person name="Wedler E."/>
            <person name="Wedler H."/>
            <person name="Wipfli P."/>
            <person name="Wolf K."/>
            <person name="Wright L.F."/>
            <person name="Zaccaria P."/>
            <person name="Zimmermann M."/>
            <person name="Zollner A."/>
            <person name="Kleine K."/>
        </authorList>
    </citation>
    <scope>NUCLEOTIDE SEQUENCE [LARGE SCALE GENOMIC DNA]</scope>
    <source>
        <strain>ATCC 204508 / S288c</strain>
    </source>
</reference>
<reference key="2">
    <citation type="journal article" date="2014" name="G3 (Bethesda)">
        <title>The reference genome sequence of Saccharomyces cerevisiae: Then and now.</title>
        <authorList>
            <person name="Engel S.R."/>
            <person name="Dietrich F.S."/>
            <person name="Fisk D.G."/>
            <person name="Binkley G."/>
            <person name="Balakrishnan R."/>
            <person name="Costanzo M.C."/>
            <person name="Dwight S.S."/>
            <person name="Hitz B.C."/>
            <person name="Karra K."/>
            <person name="Nash R.S."/>
            <person name="Weng S."/>
            <person name="Wong E.D."/>
            <person name="Lloyd P."/>
            <person name="Skrzypek M.S."/>
            <person name="Miyasato S.R."/>
            <person name="Simison M."/>
            <person name="Cherry J.M."/>
        </authorList>
    </citation>
    <scope>GENOME REANNOTATION</scope>
    <source>
        <strain>ATCC 204508 / S288c</strain>
    </source>
</reference>
<reference key="3">
    <citation type="journal article" date="1998" name="J. Biol. Chem.">
        <title>Y'-Help1, a DNA helicase encoded by the yeast subtelomeric Y' element, is induced in survivors defective for telomerase.</title>
        <authorList>
            <person name="Yamada M."/>
            <person name="Hayatsu N."/>
            <person name="Matsuura A."/>
            <person name="Ishikawa F."/>
        </authorList>
    </citation>
    <scope>FUNCTION</scope>
    <scope>INDUCTION</scope>
</reference>
<name>YRF13_YEAST</name>
<feature type="chain" id="PRO_0000102203" description="Y' element ATP-dependent helicase protein 1 copy 3">
    <location>
        <begin position="1"/>
        <end position="1859"/>
    </location>
</feature>
<feature type="domain" description="Helicase ATP-binding" evidence="1">
    <location>
        <begin position="861"/>
        <end position="1038"/>
    </location>
</feature>
<feature type="domain" description="Helicase C-terminal" evidence="2">
    <location>
        <begin position="1095"/>
        <end position="1244"/>
    </location>
</feature>
<feature type="region of interest" description="Disordered" evidence="3">
    <location>
        <begin position="1318"/>
        <end position="1485"/>
    </location>
</feature>
<feature type="compositionally biased region" description="Low complexity" evidence="3">
    <location>
        <begin position="1318"/>
        <end position="1461"/>
    </location>
</feature>
<feature type="compositionally biased region" description="Basic and acidic residues" evidence="3">
    <location>
        <begin position="1462"/>
        <end position="1485"/>
    </location>
</feature>
<feature type="binding site" evidence="1">
    <location>
        <begin position="874"/>
        <end position="881"/>
    </location>
    <ligand>
        <name>ATP</name>
        <dbReference type="ChEBI" id="CHEBI:30616"/>
    </ligand>
</feature>
<proteinExistence type="evidence at transcript level"/>
<evidence type="ECO:0000255" key="1">
    <source>
        <dbReference type="PROSITE-ProRule" id="PRU00541"/>
    </source>
</evidence>
<evidence type="ECO:0000255" key="2">
    <source>
        <dbReference type="PROSITE-ProRule" id="PRU00542"/>
    </source>
</evidence>
<evidence type="ECO:0000256" key="3">
    <source>
        <dbReference type="SAM" id="MobiDB-lite"/>
    </source>
</evidence>
<evidence type="ECO:0000305" key="4"/>
<evidence type="ECO:0000305" key="5">
    <source>
    </source>
</evidence>
<comment type="function">
    <text evidence="5">Catalyzes DNA unwinding and is involved in telomerase-independent telomere maintenance.</text>
</comment>
<comment type="induction">
    <text evidence="5">Induced in absence of telomerase TLC1.</text>
</comment>
<comment type="similarity">
    <text evidence="4">Belongs to the helicase family. Yeast subtelomeric Y' repeat subfamily.</text>
</comment>
<sequence length="1859" mass="211115">MEIENEQICTCIAQILHLLNSLIITFLDDDKTETGQSFVYIDGFLVKKHNNQHTIVNFETYKNKMKVSDRRKFEKANFDEFESALNNKNDLVHCPSITLFESIPTEVRSFYEDEKSGLIKVVKFRTGAMDRKRSFEKIVVSVMVGKNVQKFLTFVEDEPDFQGGPIPSKYLIPKKINLMVYTLFQVHTLKFNRKDYDTLSLFYLNRGYYNELSFRVLERCYEIASARPNDSSTMRTFTDFVSGTPIVRGLQKSTIRKYGYNLAPYMFLLLHVDELSIFSAYQASLPGEKKVDTERLKRDLCPRKPTEIKYFSQICNDMMNKKDRLGDILHIILRACALNFGAGPRGGAGDEEDRSITNEEPIIPSVDEHGLKVCKLRSPNTPRRLRKTLDAVKALLVSSCACTARDLDIFDDNNGVAMWKWIKILYHEVAQETALKDSYRITLVPSSDGVSVCGKLFNREYVRGFYFACKAQFDNLWEELNDCFYMPTVVDIASLILRNREVLFREPKRGIDEYLENDSFLQMIPVKYREIVLPKLRRDTNKMTAALKNKVTVAIDELTVPLMWMIHFAVGYPYRYPELQLLAFAGPQRNVYVDDTTRRIQLYTDYNKNGSSEPRLKTLDGLTSDYVFYFVTVLRQMQICALGNSYDAFNHDPWMDVVGFEDPDQVTNRDISRIVLYSYMFLNTAKGCLVEYATFRQYMRELPKNAPQKLNFREMRQGLIALGRHCVGSRFETDLYESATSELMANHSVQTGRNIYGVDSFSLTSVSGTTATLLQERASERWIQWLGLESDYHCSFSSTRNAEDVVAGEAASSDHHQKISRVTRKRPREPKSTNDILVAGQKLFGSSFEFRDLHQLRLCHEIYMADTPSVAVQAPPGYGKTELFHLPLIALASKGDVKYVSFLFVPYTVLLANCMIRLSRCGCLNVAPVRNFIEEGCDGVTDLYVGIYDDLASTNFTDRIAAWENIVECTFRTNNVKLGYLIVDEFHNFETEVYRQSQFGGITNLDFDAFEKAIFLSGTAPEAVADAALQRIGLTGLAKKSMDINELKRSEDLSRGLSSYPTRMFNLIKEKSEVPLGHVHKIWKKVESQPEEALKLLLALFEIEPESKAIVVASTTNEVEELACSWRKYFRVVWIHGKLGAAEKVSRTKEFVTDGSMRVLIGTKLVTEGIDIKQLMMVIMLDNRLNIIELIQGVGRLRDGGLCYLLSRKNSWAARNRKGELPPIKEGCITEQVREFYGLESKKGKKGQHVGCCGSRTDLSADTVELIERMDRLAEKQATASMSIVALPSSFQESNSSDRCRKYCSSDEDSDTCIHGSANASTNATTNSSTNATTTASTNVRTSATTTASINVRTSATTTESTNSSTNATTTASTNVRTSATTTASINVRTSATTTESTNSNTSATTTESTDSNTSATTTESTDSNTSATTTASTNSSTNATTTASTNSSTNATTTESTNASAKEDANKDGNAEDNRFHPVTDINKESYKRKGSQMVLLERKKLKAQFPNTSENMNVLQFLGFRSDEIKHLFLYGIDVYFCPEGVFTQYGLCKGCQKMFELCVCWAGQKVSYRRMAWEALAVERMLRNDEEYKEYLEDIEPYHGDPVGYLKYFSVKRGEIYSQIQRNYAWYLAITRRRETISVLDSTRGKQGSQVFRMSGRQIKELYYKVWSNLRESKTEVLQYFLNWDEKKCREEWEAKDDTVFVEALEKVGVFQRLRSMTSAGLQGPQYVKLQFSRHHRQLRSRYELSLGMHLRDQLALGVTPSKVPHWTAFLSMLIGLFCNKTFRQKLEYLLEQISEVWLLPHWLDLANVEVLAADNTRVPLYMLMVAVHKELDSDDVPDGRFDILLCRDSSREVGE</sequence>
<dbReference type="EC" id="5.6.2.-" evidence="5"/>
<dbReference type="EMBL" id="Z73081">
    <property type="protein sequence ID" value="CAA97329.1"/>
    <property type="molecule type" value="Genomic_DNA"/>
</dbReference>
<dbReference type="EMBL" id="BK006941">
    <property type="protein sequence ID" value="DAA08381.1"/>
    <property type="molecule type" value="Genomic_DNA"/>
</dbReference>
<dbReference type="PIR" id="S64633">
    <property type="entry name" value="S64633"/>
</dbReference>
<dbReference type="RefSeq" id="NP_011812.3">
    <property type="nucleotide sequence ID" value="NM_001181425.3"/>
</dbReference>
<dbReference type="BioGRID" id="33543">
    <property type="interactions" value="8"/>
</dbReference>
<dbReference type="BioGRID" id="35932">
    <property type="interactions" value="8"/>
</dbReference>
<dbReference type="FunCoup" id="P0CX14">
    <property type="interactions" value="93"/>
</dbReference>
<dbReference type="STRING" id="4932.YGR296W"/>
<dbReference type="PaxDb" id="4932-YGR296W"/>
<dbReference type="PeptideAtlas" id="P0CX14"/>
<dbReference type="EnsemblFungi" id="YGR296W_mRNA">
    <property type="protein sequence ID" value="YGR296W"/>
    <property type="gene ID" value="YGR296W"/>
</dbReference>
<dbReference type="EnsemblFungi" id="YPL283C_mRNA">
    <property type="protein sequence ID" value="YPL283C"/>
    <property type="gene ID" value="YPL283C"/>
</dbReference>
<dbReference type="GeneID" id="853213"/>
<dbReference type="KEGG" id="sce:YGR296W"/>
<dbReference type="KEGG" id="sce:YPL283C"/>
<dbReference type="AGR" id="SGD:S000003528"/>
<dbReference type="SGD" id="S000003528">
    <property type="gene designation" value="YRF1-3"/>
</dbReference>
<dbReference type="VEuPathDB" id="FungiDB:YGR296W"/>
<dbReference type="VEuPathDB" id="FungiDB:YPL283C"/>
<dbReference type="eggNOG" id="ENOG502QWCT">
    <property type="taxonomic scope" value="Eukaryota"/>
</dbReference>
<dbReference type="HOGENOM" id="CLU_003044_2_0_1"/>
<dbReference type="InParanoid" id="P0CX14"/>
<dbReference type="OMA" id="YATFRHY"/>
<dbReference type="OrthoDB" id="4070089at2759"/>
<dbReference type="BioCyc" id="YEAST:G3O-30952-MONOMER"/>
<dbReference type="Reactome" id="R-SCE-5689880">
    <property type="pathway name" value="Ub-specific processing proteases"/>
</dbReference>
<dbReference type="Reactome" id="R-SCE-936440">
    <property type="pathway name" value="Negative regulators of DDX58/IFIH1 signaling"/>
</dbReference>
<dbReference type="PRO" id="PR:P0CX14"/>
<dbReference type="Proteomes" id="UP000002311">
    <property type="component" value="Chromosome VII"/>
</dbReference>
<dbReference type="RNAct" id="P0CX14">
    <property type="molecule type" value="protein"/>
</dbReference>
<dbReference type="ExpressionAtlas" id="P0CX14">
    <property type="expression patterns" value="differential"/>
</dbReference>
<dbReference type="GO" id="GO:0005737">
    <property type="term" value="C:cytoplasm"/>
    <property type="evidence" value="ECO:0000318"/>
    <property type="project" value="GO_Central"/>
</dbReference>
<dbReference type="GO" id="GO:0005634">
    <property type="term" value="C:nucleus"/>
    <property type="evidence" value="ECO:0000305"/>
    <property type="project" value="SGD"/>
</dbReference>
<dbReference type="GO" id="GO:0005524">
    <property type="term" value="F:ATP binding"/>
    <property type="evidence" value="ECO:0007669"/>
    <property type="project" value="UniProtKB-KW"/>
</dbReference>
<dbReference type="GO" id="GO:0016887">
    <property type="term" value="F:ATP hydrolysis activity"/>
    <property type="evidence" value="ECO:0007669"/>
    <property type="project" value="RHEA"/>
</dbReference>
<dbReference type="GO" id="GO:0003678">
    <property type="term" value="F:DNA helicase activity"/>
    <property type="evidence" value="ECO:0000314"/>
    <property type="project" value="SGD"/>
</dbReference>
<dbReference type="GO" id="GO:0003676">
    <property type="term" value="F:nucleic acid binding"/>
    <property type="evidence" value="ECO:0007669"/>
    <property type="project" value="InterPro"/>
</dbReference>
<dbReference type="GO" id="GO:0000722">
    <property type="term" value="P:telomere maintenance via recombination"/>
    <property type="evidence" value="ECO:0000316"/>
    <property type="project" value="SGD"/>
</dbReference>
<dbReference type="FunFam" id="3.40.50.300:FF:001914">
    <property type="entry name" value="YML133C-like protein"/>
    <property type="match status" value="1"/>
</dbReference>
<dbReference type="FunFam" id="3.40.50.300:FF:002410">
    <property type="entry name" value="YML133C-like protein"/>
    <property type="match status" value="1"/>
</dbReference>
<dbReference type="Gene3D" id="3.40.50.300">
    <property type="entry name" value="P-loop containing nucleotide triphosphate hydrolases"/>
    <property type="match status" value="1"/>
</dbReference>
<dbReference type="InterPro" id="IPR011545">
    <property type="entry name" value="DEAD/DEAH_box_helicase_dom"/>
</dbReference>
<dbReference type="InterPro" id="IPR014001">
    <property type="entry name" value="Helicase_ATP-bd"/>
</dbReference>
<dbReference type="InterPro" id="IPR001650">
    <property type="entry name" value="Helicase_C-like"/>
</dbReference>
<dbReference type="InterPro" id="IPR037240">
    <property type="entry name" value="ORC1-binding_dom"/>
</dbReference>
<dbReference type="InterPro" id="IPR027417">
    <property type="entry name" value="P-loop_NTPase"/>
</dbReference>
<dbReference type="InterPro" id="IPR021646">
    <property type="entry name" value="Sir1_ORC-binding"/>
</dbReference>
<dbReference type="InterPro" id="IPR050978">
    <property type="entry name" value="Y'_ATP-dependent_helicase"/>
</dbReference>
<dbReference type="PANTHER" id="PTHR31583">
    <property type="match status" value="1"/>
</dbReference>
<dbReference type="PANTHER" id="PTHR31583:SF2">
    <property type="match status" value="1"/>
</dbReference>
<dbReference type="Pfam" id="PF00270">
    <property type="entry name" value="DEAD"/>
    <property type="match status" value="1"/>
</dbReference>
<dbReference type="Pfam" id="PF00271">
    <property type="entry name" value="Helicase_C"/>
    <property type="match status" value="1"/>
</dbReference>
<dbReference type="Pfam" id="PF11603">
    <property type="entry name" value="Sir1"/>
    <property type="match status" value="1"/>
</dbReference>
<dbReference type="SMART" id="SM00487">
    <property type="entry name" value="DEXDc"/>
    <property type="match status" value="1"/>
</dbReference>
<dbReference type="SMART" id="SM00490">
    <property type="entry name" value="HELICc"/>
    <property type="match status" value="1"/>
</dbReference>
<dbReference type="SUPFAM" id="SSF144005">
    <property type="entry name" value="ORC1-binding domain"/>
    <property type="match status" value="1"/>
</dbReference>
<dbReference type="SUPFAM" id="SSF52540">
    <property type="entry name" value="P-loop containing nucleoside triphosphate hydrolases"/>
    <property type="match status" value="1"/>
</dbReference>
<dbReference type="PROSITE" id="PS51192">
    <property type="entry name" value="HELICASE_ATP_BIND_1"/>
    <property type="match status" value="1"/>
</dbReference>
<dbReference type="PROSITE" id="PS51194">
    <property type="entry name" value="HELICASE_CTER"/>
    <property type="match status" value="1"/>
</dbReference>
<protein>
    <recommendedName>
        <fullName>Y' element ATP-dependent helicase protein 1 copy 3</fullName>
        <ecNumber evidence="5">5.6.2.-</ecNumber>
    </recommendedName>
</protein>
<gene>
    <name type="primary">YRF1-3</name>
    <name type="ordered locus">YGR296W</name>
</gene>
<keyword id="KW-0067">ATP-binding</keyword>
<keyword id="KW-0347">Helicase</keyword>
<keyword id="KW-0378">Hydrolase</keyword>
<keyword id="KW-0413">Isomerase</keyword>
<keyword id="KW-0547">Nucleotide-binding</keyword>
<keyword id="KW-1185">Reference proteome</keyword>
<keyword id="KW-0677">Repeat</keyword>